<comment type="function">
    <text evidence="1">Catalyzes the irreversible NADPH-dependent deamination of GMP to IMP. It functions in the conversion of nucleobase, nucleoside and nucleotide derivatives of G to A nucleotides, and in maintaining the intracellular balance of A and G nucleotides.</text>
</comment>
<comment type="catalytic activity">
    <reaction evidence="1">
        <text>IMP + NH4(+) + NADP(+) = GMP + NADPH + 2 H(+)</text>
        <dbReference type="Rhea" id="RHEA:17185"/>
        <dbReference type="ChEBI" id="CHEBI:15378"/>
        <dbReference type="ChEBI" id="CHEBI:28938"/>
        <dbReference type="ChEBI" id="CHEBI:57783"/>
        <dbReference type="ChEBI" id="CHEBI:58053"/>
        <dbReference type="ChEBI" id="CHEBI:58115"/>
        <dbReference type="ChEBI" id="CHEBI:58349"/>
        <dbReference type="EC" id="1.7.1.7"/>
    </reaction>
</comment>
<comment type="subunit">
    <text evidence="1">Homotetramer.</text>
</comment>
<comment type="similarity">
    <text evidence="1">Belongs to the IMPDH/GMPR family. GuaC type 1 subfamily.</text>
</comment>
<proteinExistence type="inferred from homology"/>
<sequence length="347" mass="37492">MRIEEGLKLGFKDVLIRPKRSTLKSRSEVALERQFTFKHSGWNWSGVPIIAANMDTVGTFRMAEVLASFDILTAVHKHYTLEQWAEFVKRSPESVLRHVMVSTGTSSADFDKMKQILALSPSLKFICIDVANGYSEHFVSFLQRAREACPDKVICAGNVVTGEMVEELILSGADIVKVGIGPGSVCTTRVKTGVGYPQLSAVIECADAAHGLGGQIVSDGGCSVPGDVAKAFGGGADFVMLGGMLAGHDECEGRVVEENGEKFMLFYGMSSESAMKRHVGGVAQYRAAEGKTVKLPLRGSVDNTVRDIMGGLRSACTYVGASHLKELTKRTTFIRVAEQENRVFGTD</sequence>
<dbReference type="EC" id="1.7.1.7" evidence="1"/>
<dbReference type="EMBL" id="CP000305">
    <property type="protein sequence ID" value="ABG16992.1"/>
    <property type="molecule type" value="Genomic_DNA"/>
</dbReference>
<dbReference type="EMBL" id="ACNQ01000007">
    <property type="protein sequence ID" value="EEO77847.1"/>
    <property type="molecule type" value="Genomic_DNA"/>
</dbReference>
<dbReference type="RefSeq" id="WP_002209320.1">
    <property type="nucleotide sequence ID" value="NZ_ACNQ01000007.1"/>
</dbReference>
<dbReference type="SMR" id="Q1CLY8"/>
<dbReference type="KEGG" id="ypn:YPN_0660"/>
<dbReference type="HOGENOM" id="CLU_022552_5_3_6"/>
<dbReference type="Proteomes" id="UP000008936">
    <property type="component" value="Chromosome"/>
</dbReference>
<dbReference type="GO" id="GO:0005829">
    <property type="term" value="C:cytosol"/>
    <property type="evidence" value="ECO:0007669"/>
    <property type="project" value="TreeGrafter"/>
</dbReference>
<dbReference type="GO" id="GO:1902560">
    <property type="term" value="C:GMP reductase complex"/>
    <property type="evidence" value="ECO:0007669"/>
    <property type="project" value="InterPro"/>
</dbReference>
<dbReference type="GO" id="GO:0003920">
    <property type="term" value="F:GMP reductase activity"/>
    <property type="evidence" value="ECO:0007669"/>
    <property type="project" value="UniProtKB-UniRule"/>
</dbReference>
<dbReference type="GO" id="GO:0046872">
    <property type="term" value="F:metal ion binding"/>
    <property type="evidence" value="ECO:0007669"/>
    <property type="project" value="UniProtKB-KW"/>
</dbReference>
<dbReference type="GO" id="GO:0006163">
    <property type="term" value="P:purine nucleotide metabolic process"/>
    <property type="evidence" value="ECO:0007669"/>
    <property type="project" value="UniProtKB-UniRule"/>
</dbReference>
<dbReference type="CDD" id="cd00381">
    <property type="entry name" value="IMPDH"/>
    <property type="match status" value="1"/>
</dbReference>
<dbReference type="FunFam" id="3.20.20.70:FF:000012">
    <property type="entry name" value="GMP reductase"/>
    <property type="match status" value="1"/>
</dbReference>
<dbReference type="Gene3D" id="3.20.20.70">
    <property type="entry name" value="Aldolase class I"/>
    <property type="match status" value="1"/>
</dbReference>
<dbReference type="HAMAP" id="MF_00596">
    <property type="entry name" value="GMP_reduct_type1"/>
    <property type="match status" value="1"/>
</dbReference>
<dbReference type="InterPro" id="IPR013785">
    <property type="entry name" value="Aldolase_TIM"/>
</dbReference>
<dbReference type="InterPro" id="IPR050139">
    <property type="entry name" value="GMP_reductase"/>
</dbReference>
<dbReference type="InterPro" id="IPR005993">
    <property type="entry name" value="GMPR"/>
</dbReference>
<dbReference type="InterPro" id="IPR015875">
    <property type="entry name" value="IMP_DH/GMP_Rdtase_CS"/>
</dbReference>
<dbReference type="InterPro" id="IPR001093">
    <property type="entry name" value="IMP_DH_GMPRt"/>
</dbReference>
<dbReference type="NCBIfam" id="TIGR01305">
    <property type="entry name" value="GMP_reduct_1"/>
    <property type="match status" value="1"/>
</dbReference>
<dbReference type="NCBIfam" id="NF003470">
    <property type="entry name" value="PRK05096.1"/>
    <property type="match status" value="1"/>
</dbReference>
<dbReference type="PANTHER" id="PTHR43170">
    <property type="entry name" value="GMP REDUCTASE"/>
    <property type="match status" value="1"/>
</dbReference>
<dbReference type="PANTHER" id="PTHR43170:SF5">
    <property type="entry name" value="GMP REDUCTASE"/>
    <property type="match status" value="1"/>
</dbReference>
<dbReference type="Pfam" id="PF00478">
    <property type="entry name" value="IMPDH"/>
    <property type="match status" value="1"/>
</dbReference>
<dbReference type="PIRSF" id="PIRSF000235">
    <property type="entry name" value="GMP_reductase"/>
    <property type="match status" value="1"/>
</dbReference>
<dbReference type="SMART" id="SM01240">
    <property type="entry name" value="IMPDH"/>
    <property type="match status" value="1"/>
</dbReference>
<dbReference type="SUPFAM" id="SSF51412">
    <property type="entry name" value="Inosine monophosphate dehydrogenase (IMPDH)"/>
    <property type="match status" value="1"/>
</dbReference>
<dbReference type="PROSITE" id="PS00487">
    <property type="entry name" value="IMP_DH_GMP_RED"/>
    <property type="match status" value="1"/>
</dbReference>
<feature type="chain" id="PRO_1000025626" description="GMP reductase">
    <location>
        <begin position="1"/>
        <end position="347"/>
    </location>
</feature>
<feature type="active site" description="Thioimidate intermediate" evidence="1">
    <location>
        <position position="186"/>
    </location>
</feature>
<feature type="binding site" evidence="1">
    <location>
        <begin position="108"/>
        <end position="131"/>
    </location>
    <ligand>
        <name>NADP(+)</name>
        <dbReference type="ChEBI" id="CHEBI:58349"/>
    </ligand>
</feature>
<feature type="binding site" evidence="1">
    <location>
        <position position="181"/>
    </location>
    <ligand>
        <name>K(+)</name>
        <dbReference type="ChEBI" id="CHEBI:29103"/>
    </ligand>
</feature>
<feature type="binding site" evidence="1">
    <location>
        <position position="183"/>
    </location>
    <ligand>
        <name>K(+)</name>
        <dbReference type="ChEBI" id="CHEBI:29103"/>
    </ligand>
</feature>
<feature type="binding site" evidence="1">
    <location>
        <begin position="216"/>
        <end position="239"/>
    </location>
    <ligand>
        <name>NADP(+)</name>
        <dbReference type="ChEBI" id="CHEBI:58349"/>
    </ligand>
</feature>
<organism>
    <name type="scientific">Yersinia pestis bv. Antiqua (strain Nepal516)</name>
    <dbReference type="NCBI Taxonomy" id="377628"/>
    <lineage>
        <taxon>Bacteria</taxon>
        <taxon>Pseudomonadati</taxon>
        <taxon>Pseudomonadota</taxon>
        <taxon>Gammaproteobacteria</taxon>
        <taxon>Enterobacterales</taxon>
        <taxon>Yersiniaceae</taxon>
        <taxon>Yersinia</taxon>
    </lineage>
</organism>
<name>GUAC_YERPN</name>
<reference key="1">
    <citation type="journal article" date="2006" name="J. Bacteriol.">
        <title>Complete genome sequence of Yersinia pestis strains Antiqua and Nepal516: evidence of gene reduction in an emerging pathogen.</title>
        <authorList>
            <person name="Chain P.S.G."/>
            <person name="Hu P."/>
            <person name="Malfatti S.A."/>
            <person name="Radnedge L."/>
            <person name="Larimer F."/>
            <person name="Vergez L.M."/>
            <person name="Worsham P."/>
            <person name="Chu M.C."/>
            <person name="Andersen G.L."/>
        </authorList>
    </citation>
    <scope>NUCLEOTIDE SEQUENCE [LARGE SCALE GENOMIC DNA]</scope>
    <source>
        <strain>Nepal516</strain>
    </source>
</reference>
<reference key="2">
    <citation type="submission" date="2009-04" db="EMBL/GenBank/DDBJ databases">
        <title>Yersinia pestis Nepal516A whole genome shotgun sequencing project.</title>
        <authorList>
            <person name="Plunkett G. III"/>
            <person name="Anderson B.D."/>
            <person name="Baumler D.J."/>
            <person name="Burland V."/>
            <person name="Cabot E.L."/>
            <person name="Glasner J.D."/>
            <person name="Mau B."/>
            <person name="Neeno-Eckwall E."/>
            <person name="Perna N.T."/>
            <person name="Munk A.C."/>
            <person name="Tapia R."/>
            <person name="Green L.D."/>
            <person name="Rogers Y.C."/>
            <person name="Detter J.C."/>
            <person name="Bruce D.C."/>
            <person name="Brettin T.S."/>
        </authorList>
    </citation>
    <scope>NUCLEOTIDE SEQUENCE [LARGE SCALE GENOMIC DNA]</scope>
    <source>
        <strain>Nepal516</strain>
    </source>
</reference>
<gene>
    <name evidence="1" type="primary">guaC</name>
    <name type="ordered locus">YPN_0660</name>
    <name type="ORF">YP516_0698</name>
</gene>
<evidence type="ECO:0000255" key="1">
    <source>
        <dbReference type="HAMAP-Rule" id="MF_00596"/>
    </source>
</evidence>
<protein>
    <recommendedName>
        <fullName evidence="1">GMP reductase</fullName>
        <ecNumber evidence="1">1.7.1.7</ecNumber>
    </recommendedName>
    <alternativeName>
        <fullName evidence="1">Guanosine 5'-monophosphate oxidoreductase</fullName>
        <shortName evidence="1">Guanosine monophosphate reductase</shortName>
    </alternativeName>
</protein>
<accession>Q1CLY8</accession>
<accession>C4GQ21</accession>
<keyword id="KW-0479">Metal-binding</keyword>
<keyword id="KW-0521">NADP</keyword>
<keyword id="KW-0560">Oxidoreductase</keyword>
<keyword id="KW-0630">Potassium</keyword>